<proteinExistence type="evidence at protein level"/>
<gene>
    <name type="ORF">SPBC3B8.06</name>
</gene>
<organism>
    <name type="scientific">Schizosaccharomyces pombe (strain 972 / ATCC 24843)</name>
    <name type="common">Fission yeast</name>
    <dbReference type="NCBI Taxonomy" id="284812"/>
    <lineage>
        <taxon>Eukaryota</taxon>
        <taxon>Fungi</taxon>
        <taxon>Dikarya</taxon>
        <taxon>Ascomycota</taxon>
        <taxon>Taphrinomycotina</taxon>
        <taxon>Schizosaccharomycetes</taxon>
        <taxon>Schizosaccharomycetales</taxon>
        <taxon>Schizosaccharomycetaceae</taxon>
        <taxon>Schizosaccharomyces</taxon>
    </lineage>
</organism>
<feature type="chain" id="PRO_0000372353" description="Uncharacterized membrane protein C3B8.06">
    <location>
        <begin position="1"/>
        <end position="511"/>
    </location>
</feature>
<feature type="transmembrane region" description="Helical" evidence="1">
    <location>
        <begin position="33"/>
        <end position="53"/>
    </location>
</feature>
<feature type="transmembrane region" description="Helical" evidence="1">
    <location>
        <begin position="59"/>
        <end position="79"/>
    </location>
</feature>
<feature type="transmembrane region" description="Helical" evidence="1">
    <location>
        <begin position="97"/>
        <end position="117"/>
    </location>
</feature>
<feature type="transmembrane region" description="Helical" evidence="1">
    <location>
        <begin position="216"/>
        <end position="236"/>
    </location>
</feature>
<feature type="transmembrane region" description="Helical" evidence="1">
    <location>
        <begin position="249"/>
        <end position="269"/>
    </location>
</feature>
<feature type="transmembrane region" description="Helical" evidence="1">
    <location>
        <begin position="297"/>
        <end position="317"/>
    </location>
</feature>
<feature type="transmembrane region" description="Helical" evidence="1">
    <location>
        <begin position="332"/>
        <end position="352"/>
    </location>
</feature>
<feature type="transmembrane region" description="Helical" evidence="1">
    <location>
        <begin position="412"/>
        <end position="432"/>
    </location>
</feature>
<feature type="transmembrane region" description="Helical" evidence="1">
    <location>
        <begin position="449"/>
        <end position="469"/>
    </location>
</feature>
<feature type="transmembrane region" description="Helical" evidence="1">
    <location>
        <begin position="483"/>
        <end position="503"/>
    </location>
</feature>
<feature type="region of interest" description="Disordered" evidence="2">
    <location>
        <begin position="157"/>
        <end position="180"/>
    </location>
</feature>
<feature type="modified residue" description="Phosphoserine" evidence="4">
    <location>
        <position position="147"/>
    </location>
</feature>
<feature type="modified residue" description="Phosphoserine" evidence="4">
    <location>
        <position position="161"/>
    </location>
</feature>
<feature type="modified residue" description="Phosphoserine" evidence="4">
    <location>
        <position position="162"/>
    </location>
</feature>
<keyword id="KW-0256">Endoplasmic reticulum</keyword>
<keyword id="KW-0472">Membrane</keyword>
<keyword id="KW-0597">Phosphoprotein</keyword>
<keyword id="KW-1185">Reference proteome</keyword>
<keyword id="KW-0812">Transmembrane</keyword>
<keyword id="KW-1133">Transmembrane helix</keyword>
<name>YBH6_SCHPO</name>
<reference key="1">
    <citation type="journal article" date="2002" name="Nature">
        <title>The genome sequence of Schizosaccharomyces pombe.</title>
        <authorList>
            <person name="Wood V."/>
            <person name="Gwilliam R."/>
            <person name="Rajandream M.A."/>
            <person name="Lyne M.H."/>
            <person name="Lyne R."/>
            <person name="Stewart A."/>
            <person name="Sgouros J.G."/>
            <person name="Peat N."/>
            <person name="Hayles J."/>
            <person name="Baker S.G."/>
            <person name="Basham D."/>
            <person name="Bowman S."/>
            <person name="Brooks K."/>
            <person name="Brown D."/>
            <person name="Brown S."/>
            <person name="Chillingworth T."/>
            <person name="Churcher C.M."/>
            <person name="Collins M."/>
            <person name="Connor R."/>
            <person name="Cronin A."/>
            <person name="Davis P."/>
            <person name="Feltwell T."/>
            <person name="Fraser A."/>
            <person name="Gentles S."/>
            <person name="Goble A."/>
            <person name="Hamlin N."/>
            <person name="Harris D.E."/>
            <person name="Hidalgo J."/>
            <person name="Hodgson G."/>
            <person name="Holroyd S."/>
            <person name="Hornsby T."/>
            <person name="Howarth S."/>
            <person name="Huckle E.J."/>
            <person name="Hunt S."/>
            <person name="Jagels K."/>
            <person name="James K.D."/>
            <person name="Jones L."/>
            <person name="Jones M."/>
            <person name="Leather S."/>
            <person name="McDonald S."/>
            <person name="McLean J."/>
            <person name="Mooney P."/>
            <person name="Moule S."/>
            <person name="Mungall K.L."/>
            <person name="Murphy L.D."/>
            <person name="Niblett D."/>
            <person name="Odell C."/>
            <person name="Oliver K."/>
            <person name="O'Neil S."/>
            <person name="Pearson D."/>
            <person name="Quail M.A."/>
            <person name="Rabbinowitsch E."/>
            <person name="Rutherford K.M."/>
            <person name="Rutter S."/>
            <person name="Saunders D."/>
            <person name="Seeger K."/>
            <person name="Sharp S."/>
            <person name="Skelton J."/>
            <person name="Simmonds M.N."/>
            <person name="Squares R."/>
            <person name="Squares S."/>
            <person name="Stevens K."/>
            <person name="Taylor K."/>
            <person name="Taylor R.G."/>
            <person name="Tivey A."/>
            <person name="Walsh S.V."/>
            <person name="Warren T."/>
            <person name="Whitehead S."/>
            <person name="Woodward J.R."/>
            <person name="Volckaert G."/>
            <person name="Aert R."/>
            <person name="Robben J."/>
            <person name="Grymonprez B."/>
            <person name="Weltjens I."/>
            <person name="Vanstreels E."/>
            <person name="Rieger M."/>
            <person name="Schaefer M."/>
            <person name="Mueller-Auer S."/>
            <person name="Gabel C."/>
            <person name="Fuchs M."/>
            <person name="Duesterhoeft A."/>
            <person name="Fritzc C."/>
            <person name="Holzer E."/>
            <person name="Moestl D."/>
            <person name="Hilbert H."/>
            <person name="Borzym K."/>
            <person name="Langer I."/>
            <person name="Beck A."/>
            <person name="Lehrach H."/>
            <person name="Reinhardt R."/>
            <person name="Pohl T.M."/>
            <person name="Eger P."/>
            <person name="Zimmermann W."/>
            <person name="Wedler H."/>
            <person name="Wambutt R."/>
            <person name="Purnelle B."/>
            <person name="Goffeau A."/>
            <person name="Cadieu E."/>
            <person name="Dreano S."/>
            <person name="Gloux S."/>
            <person name="Lelaure V."/>
            <person name="Mottier S."/>
            <person name="Galibert F."/>
            <person name="Aves S.J."/>
            <person name="Xiang Z."/>
            <person name="Hunt C."/>
            <person name="Moore K."/>
            <person name="Hurst S.M."/>
            <person name="Lucas M."/>
            <person name="Rochet M."/>
            <person name="Gaillardin C."/>
            <person name="Tallada V.A."/>
            <person name="Garzon A."/>
            <person name="Thode G."/>
            <person name="Daga R.R."/>
            <person name="Cruzado L."/>
            <person name="Jimenez J."/>
            <person name="Sanchez M."/>
            <person name="del Rey F."/>
            <person name="Benito J."/>
            <person name="Dominguez A."/>
            <person name="Revuelta J.L."/>
            <person name="Moreno S."/>
            <person name="Armstrong J."/>
            <person name="Forsburg S.L."/>
            <person name="Cerutti L."/>
            <person name="Lowe T."/>
            <person name="McCombie W.R."/>
            <person name="Paulsen I."/>
            <person name="Potashkin J."/>
            <person name="Shpakovski G.V."/>
            <person name="Ussery D."/>
            <person name="Barrell B.G."/>
            <person name="Nurse P."/>
        </authorList>
    </citation>
    <scope>NUCLEOTIDE SEQUENCE [LARGE SCALE GENOMIC DNA]</scope>
    <source>
        <strain>972 / ATCC 24843</strain>
    </source>
</reference>
<reference key="2">
    <citation type="journal article" date="2006" name="Nat. Biotechnol.">
        <title>ORFeome cloning and global analysis of protein localization in the fission yeast Schizosaccharomyces pombe.</title>
        <authorList>
            <person name="Matsuyama A."/>
            <person name="Arai R."/>
            <person name="Yashiroda Y."/>
            <person name="Shirai A."/>
            <person name="Kamata A."/>
            <person name="Sekido S."/>
            <person name="Kobayashi Y."/>
            <person name="Hashimoto A."/>
            <person name="Hamamoto M."/>
            <person name="Hiraoka Y."/>
            <person name="Horinouchi S."/>
            <person name="Yoshida M."/>
        </authorList>
    </citation>
    <scope>SUBCELLULAR LOCATION [LARGE SCALE ANALYSIS]</scope>
</reference>
<reference key="3">
    <citation type="journal article" date="2008" name="J. Proteome Res.">
        <title>Phosphoproteome analysis of fission yeast.</title>
        <authorList>
            <person name="Wilson-Grady J.T."/>
            <person name="Villen J."/>
            <person name="Gygi S.P."/>
        </authorList>
    </citation>
    <scope>PHOSPHORYLATION [LARGE SCALE ANALYSIS] AT SER-147; SER-161 AND SER-162</scope>
    <scope>IDENTIFICATION BY MASS SPECTROMETRY</scope>
</reference>
<evidence type="ECO:0000255" key="1"/>
<evidence type="ECO:0000256" key="2">
    <source>
        <dbReference type="SAM" id="MobiDB-lite"/>
    </source>
</evidence>
<evidence type="ECO:0000269" key="3">
    <source>
    </source>
</evidence>
<evidence type="ECO:0000269" key="4">
    <source>
    </source>
</evidence>
<evidence type="ECO:0000305" key="5"/>
<comment type="subcellular location">
    <subcellularLocation>
        <location evidence="3">Endoplasmic reticulum membrane</location>
        <topology evidence="3">Multi-pass membrane protein</topology>
    </subcellularLocation>
</comment>
<comment type="similarity">
    <text evidence="5">To yeast YCR061W.</text>
</comment>
<dbReference type="EMBL" id="CU329671">
    <property type="protein sequence ID" value="CAA18295.1"/>
    <property type="molecule type" value="Genomic_DNA"/>
</dbReference>
<dbReference type="PIR" id="T40334">
    <property type="entry name" value="T40334"/>
</dbReference>
<dbReference type="RefSeq" id="NP_596408.1">
    <property type="nucleotide sequence ID" value="NM_001022327.2"/>
</dbReference>
<dbReference type="BioGRID" id="276797">
    <property type="interactions" value="3"/>
</dbReference>
<dbReference type="FunCoup" id="O59714">
    <property type="interactions" value="16"/>
</dbReference>
<dbReference type="STRING" id="284812.O59714"/>
<dbReference type="iPTMnet" id="O59714"/>
<dbReference type="PaxDb" id="4896-SPBC3B8.06.1"/>
<dbReference type="EnsemblFungi" id="SPBC3B8.06.1">
    <property type="protein sequence ID" value="SPBC3B8.06.1:pep"/>
    <property type="gene ID" value="SPBC3B8.06"/>
</dbReference>
<dbReference type="PomBase" id="SPBC3B8.06"/>
<dbReference type="VEuPathDB" id="FungiDB:SPBC3B8.06"/>
<dbReference type="eggNOG" id="ENOG502QW3E">
    <property type="taxonomic scope" value="Eukaryota"/>
</dbReference>
<dbReference type="HOGENOM" id="CLU_012543_1_0_1"/>
<dbReference type="InParanoid" id="O59714"/>
<dbReference type="OMA" id="ENYANHM"/>
<dbReference type="PhylomeDB" id="O59714"/>
<dbReference type="PRO" id="PR:O59714"/>
<dbReference type="Proteomes" id="UP000002485">
    <property type="component" value="Chromosome II"/>
</dbReference>
<dbReference type="GO" id="GO:0005783">
    <property type="term" value="C:endoplasmic reticulum"/>
    <property type="evidence" value="ECO:0007005"/>
    <property type="project" value="PomBase"/>
</dbReference>
<dbReference type="GO" id="GO:0005789">
    <property type="term" value="C:endoplasmic reticulum membrane"/>
    <property type="evidence" value="ECO:0007669"/>
    <property type="project" value="UniProtKB-SubCell"/>
</dbReference>
<dbReference type="Gene3D" id="1.20.120.1770">
    <property type="match status" value="1"/>
</dbReference>
<dbReference type="InterPro" id="IPR018825">
    <property type="entry name" value="DUF2427"/>
</dbReference>
<dbReference type="InterPro" id="IPR018827">
    <property type="entry name" value="YTP1_C"/>
</dbReference>
<dbReference type="PANTHER" id="PTHR31685:SF3">
    <property type="entry name" value="INTEGRAL MEMBRANE PROTEIN (AFU_ORTHOLOGUE AFUA_6G12730)"/>
    <property type="match status" value="1"/>
</dbReference>
<dbReference type="PANTHER" id="PTHR31685">
    <property type="entry name" value="INTEGRAL MEMBRANE PROTEIN (AFU_ORTHOLOGUE AFUA_6G12730)-RELATED"/>
    <property type="match status" value="1"/>
</dbReference>
<dbReference type="Pfam" id="PF10348">
    <property type="entry name" value="DUF2427"/>
    <property type="match status" value="1"/>
</dbReference>
<dbReference type="Pfam" id="PF10355">
    <property type="entry name" value="Ytp1"/>
    <property type="match status" value="1"/>
</dbReference>
<protein>
    <recommendedName>
        <fullName>Uncharacterized membrane protein C3B8.06</fullName>
    </recommendedName>
</protein>
<accession>O59714</accession>
<sequence length="511" mass="57703">MDGMHMNSTGDNPIEIDFENYANHMNKFLMAHIICMIIAYVFILPAGIVLAMAKSKAHIPVQIVYVILTLIGYIFAHISHHKASPENYYKGNIHRPVGRFFMWITFLIAIVGITTSILKKRMLKEYQPAAEAPGAMEDPEQALQRNSLDDGAPLLPREGNSSDEYLPPQSSRRDVSSEKPSIPSISFINIRSWRTIPKKWCVLQVLRYFHRILGHLWLYVGFFESCTGIVLLAGIFKGQHIFNGLAHWIKGAIFLWYGILSFGEYLGAFSEYGWAWNVVPKQLSEKRFAKYVPTKEMVESFLLFAYGVSNVWLEHLGNTDGKWNHHDLQHASLAFMLWWAGLCGILVESKVVHRLLNATLSATLGQRRSEDSEHSENGLPSYNVFPALTVFFTGIMMSAHDQTNHVSTVIHVLWGRLLAAAAIARICTYIMLYLKPPSSPWPTRPPTEIITSFCLICGGAMFMASSYDVVNKIRLNEMSPMLIMNISVAFTCIVMGLEVMFLILKGYASSR</sequence>